<keyword id="KW-0326">Glycosidase</keyword>
<keyword id="KW-0378">Hydrolase</keyword>
<keyword id="KW-1185">Reference proteome</keyword>
<evidence type="ECO:0000255" key="1">
    <source>
        <dbReference type="HAMAP-Rule" id="MF_01431"/>
    </source>
</evidence>
<name>RIHA_SALAR</name>
<dbReference type="EC" id="3.2.-.-" evidence="1"/>
<dbReference type="EMBL" id="CP000880">
    <property type="protein sequence ID" value="ABX22145.1"/>
    <property type="molecule type" value="Genomic_DNA"/>
</dbReference>
<dbReference type="SMR" id="A9MKC6"/>
<dbReference type="STRING" id="41514.SARI_02282"/>
<dbReference type="KEGG" id="ses:SARI_02282"/>
<dbReference type="HOGENOM" id="CLU_036838_2_0_6"/>
<dbReference type="Proteomes" id="UP000002084">
    <property type="component" value="Chromosome"/>
</dbReference>
<dbReference type="GO" id="GO:0005829">
    <property type="term" value="C:cytosol"/>
    <property type="evidence" value="ECO:0007669"/>
    <property type="project" value="TreeGrafter"/>
</dbReference>
<dbReference type="GO" id="GO:0008477">
    <property type="term" value="F:purine nucleosidase activity"/>
    <property type="evidence" value="ECO:0007669"/>
    <property type="project" value="TreeGrafter"/>
</dbReference>
<dbReference type="GO" id="GO:0045437">
    <property type="term" value="F:uridine nucleosidase activity"/>
    <property type="evidence" value="ECO:0007669"/>
    <property type="project" value="InterPro"/>
</dbReference>
<dbReference type="GO" id="GO:0015949">
    <property type="term" value="P:nucleobase-containing small molecule interconversion"/>
    <property type="evidence" value="ECO:0007669"/>
    <property type="project" value="InterPro"/>
</dbReference>
<dbReference type="GO" id="GO:0006152">
    <property type="term" value="P:purine nucleoside catabolic process"/>
    <property type="evidence" value="ECO:0007669"/>
    <property type="project" value="TreeGrafter"/>
</dbReference>
<dbReference type="GO" id="GO:0006206">
    <property type="term" value="P:pyrimidine nucleobase metabolic process"/>
    <property type="evidence" value="ECO:0007669"/>
    <property type="project" value="UniProtKB-UniRule"/>
</dbReference>
<dbReference type="CDD" id="cd02651">
    <property type="entry name" value="nuc_hydro_IU_UC_XIUA"/>
    <property type="match status" value="1"/>
</dbReference>
<dbReference type="FunFam" id="3.90.245.10:FF:000001">
    <property type="entry name" value="Pyrimidine-specific ribonucleoside hydrolase RihA"/>
    <property type="match status" value="1"/>
</dbReference>
<dbReference type="Gene3D" id="3.90.245.10">
    <property type="entry name" value="Ribonucleoside hydrolase-like"/>
    <property type="match status" value="1"/>
</dbReference>
<dbReference type="HAMAP" id="MF_01431">
    <property type="entry name" value="Pyrim_hydro_RihA"/>
    <property type="match status" value="1"/>
</dbReference>
<dbReference type="InterPro" id="IPR015910">
    <property type="entry name" value="I/U_nuclsd_hydro_CS"/>
</dbReference>
<dbReference type="InterPro" id="IPR001910">
    <property type="entry name" value="Inosine/uridine_hydrolase_dom"/>
</dbReference>
<dbReference type="InterPro" id="IPR023186">
    <property type="entry name" value="IUNH"/>
</dbReference>
<dbReference type="InterPro" id="IPR022975">
    <property type="entry name" value="Pyrim_hydro_RihA"/>
</dbReference>
<dbReference type="InterPro" id="IPR036452">
    <property type="entry name" value="Ribo_hydro-like"/>
</dbReference>
<dbReference type="NCBIfam" id="NF007761">
    <property type="entry name" value="PRK10443.1"/>
    <property type="match status" value="1"/>
</dbReference>
<dbReference type="PANTHER" id="PTHR12304">
    <property type="entry name" value="INOSINE-URIDINE PREFERRING NUCLEOSIDE HYDROLASE"/>
    <property type="match status" value="1"/>
</dbReference>
<dbReference type="PANTHER" id="PTHR12304:SF4">
    <property type="entry name" value="URIDINE NUCLEOSIDASE"/>
    <property type="match status" value="1"/>
</dbReference>
<dbReference type="Pfam" id="PF01156">
    <property type="entry name" value="IU_nuc_hydro"/>
    <property type="match status" value="1"/>
</dbReference>
<dbReference type="SUPFAM" id="SSF53590">
    <property type="entry name" value="Nucleoside hydrolase"/>
    <property type="match status" value="1"/>
</dbReference>
<dbReference type="PROSITE" id="PS01247">
    <property type="entry name" value="IUNH"/>
    <property type="match status" value="1"/>
</dbReference>
<reference key="1">
    <citation type="submission" date="2007-11" db="EMBL/GenBank/DDBJ databases">
        <authorList>
            <consortium name="The Salmonella enterica serovar Arizonae Genome Sequencing Project"/>
            <person name="McClelland M."/>
            <person name="Sanderson E.K."/>
            <person name="Porwollik S."/>
            <person name="Spieth J."/>
            <person name="Clifton W.S."/>
            <person name="Fulton R."/>
            <person name="Chunyan W."/>
            <person name="Wollam A."/>
            <person name="Shah N."/>
            <person name="Pepin K."/>
            <person name="Bhonagiri V."/>
            <person name="Nash W."/>
            <person name="Johnson M."/>
            <person name="Thiruvilangam P."/>
            <person name="Wilson R."/>
        </authorList>
    </citation>
    <scope>NUCLEOTIDE SEQUENCE [LARGE SCALE GENOMIC DNA]</scope>
    <source>
        <strain>ATCC BAA-731 / CDC346-86 / RSK2980</strain>
    </source>
</reference>
<proteinExistence type="inferred from homology"/>
<organism>
    <name type="scientific">Salmonella arizonae (strain ATCC BAA-731 / CDC346-86 / RSK2980)</name>
    <dbReference type="NCBI Taxonomy" id="41514"/>
    <lineage>
        <taxon>Bacteria</taxon>
        <taxon>Pseudomonadati</taxon>
        <taxon>Pseudomonadota</taxon>
        <taxon>Gammaproteobacteria</taxon>
        <taxon>Enterobacterales</taxon>
        <taxon>Enterobacteriaceae</taxon>
        <taxon>Salmonella</taxon>
    </lineage>
</organism>
<accession>A9MKC6</accession>
<comment type="function">
    <text evidence="1">Hydrolyzes cytidine or uridine to ribose and cytosine or uracil, respectively.</text>
</comment>
<comment type="similarity">
    <text evidence="1">Belongs to the IUNH family. RihA subfamily.</text>
</comment>
<gene>
    <name evidence="1" type="primary">rihA</name>
    <name type="ordered locus">SARI_02282</name>
</gene>
<protein>
    <recommendedName>
        <fullName evidence="1">Pyrimidine-specific ribonucleoside hydrolase RihA</fullName>
        <ecNumber evidence="1">3.2.-.-</ecNumber>
    </recommendedName>
    <alternativeName>
        <fullName evidence="1">Cytidine/uridine-specific hydrolase</fullName>
    </alternativeName>
</protein>
<feature type="chain" id="PRO_1000087435" description="Pyrimidine-specific ribonucleoside hydrolase RihA">
    <location>
        <begin position="1"/>
        <end position="311"/>
    </location>
</feature>
<feature type="active site" evidence="1">
    <location>
        <position position="240"/>
    </location>
</feature>
<sequence>MALPIILDCDPGHDDAIAIVLALASPELDVKAITSSAGNQTPDKTLRNVLRMLTLLKRSDIPVAGGAVKPLMRELIIADNVHGESGLDGPALPEPSFAPQNCTAVELMAKTLRESPQPVTLVATGPQTNVALLLNSHPELHAKIARIVIMGGAMGLGNWTPAAEFNIYVDPEAAEIVFQSGIPVLMAGLDVTHKAQIHTADIERFRAIGNPISTIVAELLDFFLEYHKDEKWGFTGAPLHDPCTIAWLLKAELFTTVERWVGVETQGKYTQGMTVVDYYFLTGNKPNATVMVDVDREGFVDLLAERLKFYG</sequence>